<protein>
    <recommendedName>
        <fullName evidence="1">Acetylglutamate kinase</fullName>
        <ecNumber evidence="1">2.7.2.8</ecNumber>
    </recommendedName>
    <alternativeName>
        <fullName evidence="1">N-acetyl-L-glutamate 5-phosphotransferase</fullName>
    </alternativeName>
    <alternativeName>
        <fullName evidence="1">NAG kinase</fullName>
        <shortName evidence="1">NAGK</shortName>
    </alternativeName>
</protein>
<gene>
    <name evidence="1" type="primary">argB</name>
    <name type="ordered locus">SCO1578</name>
    <name type="ORF">SCL24.14c</name>
</gene>
<sequence>MSDGTSNAPTRKHTALPKAQILIEALPWLTRHHGKTVVIKFGGNAMIDEDLKAAFAQDVVFLRHAGLKPVVVHGGGPQISAALDKHGIVSEFKAGLRVTTEDAMDVVRMVLAGQVQRELVGLLNQHGPLAVGLTGEDAHTLTATKHQPEIDGELVDIGRVGEITEIDTGAIEALLADGRIPVVSSIARSQDDHHVYNVNADTAAAALAAALGAETLMVLTDVEGLYEDWPDSDEVISRLTASELEKLLPDLSSGMVPKMEGCLHAVRGGVTTARVIDGRVQHSILLEIFTDEGIGTMVVPDEQGES</sequence>
<keyword id="KW-0028">Amino-acid biosynthesis</keyword>
<keyword id="KW-0055">Arginine biosynthesis</keyword>
<keyword id="KW-0067">ATP-binding</keyword>
<keyword id="KW-0963">Cytoplasm</keyword>
<keyword id="KW-0418">Kinase</keyword>
<keyword id="KW-0547">Nucleotide-binding</keyword>
<keyword id="KW-1185">Reference proteome</keyword>
<keyword id="KW-0808">Transferase</keyword>
<comment type="function">
    <text evidence="1">Catalyzes the ATP-dependent phosphorylation of N-acetyl-L-glutamate.</text>
</comment>
<comment type="catalytic activity">
    <reaction evidence="1">
        <text>N-acetyl-L-glutamate + ATP = N-acetyl-L-glutamyl 5-phosphate + ADP</text>
        <dbReference type="Rhea" id="RHEA:14629"/>
        <dbReference type="ChEBI" id="CHEBI:30616"/>
        <dbReference type="ChEBI" id="CHEBI:44337"/>
        <dbReference type="ChEBI" id="CHEBI:57936"/>
        <dbReference type="ChEBI" id="CHEBI:456216"/>
        <dbReference type="EC" id="2.7.2.8"/>
    </reaction>
</comment>
<comment type="pathway">
    <text evidence="1">Amino-acid biosynthesis; L-arginine biosynthesis; N(2)-acetyl-L-ornithine from L-glutamate: step 2/4.</text>
</comment>
<comment type="subcellular location">
    <subcellularLocation>
        <location evidence="1">Cytoplasm</location>
    </subcellularLocation>
</comment>
<comment type="similarity">
    <text evidence="1">Belongs to the acetylglutamate kinase family. ArgB subfamily.</text>
</comment>
<evidence type="ECO:0000255" key="1">
    <source>
        <dbReference type="HAMAP-Rule" id="MF_00082"/>
    </source>
</evidence>
<accession>Q9L1A3</accession>
<dbReference type="EC" id="2.7.2.8" evidence="1"/>
<dbReference type="EMBL" id="AL939109">
    <property type="protein sequence ID" value="CAB76098.1"/>
    <property type="molecule type" value="Genomic_DNA"/>
</dbReference>
<dbReference type="RefSeq" id="NP_625855.1">
    <property type="nucleotide sequence ID" value="NC_003888.3"/>
</dbReference>
<dbReference type="RefSeq" id="WP_003977246.1">
    <property type="nucleotide sequence ID" value="NZ_VNID01000021.1"/>
</dbReference>
<dbReference type="SMR" id="Q9L1A3"/>
<dbReference type="FunCoup" id="Q9L1A3">
    <property type="interactions" value="309"/>
</dbReference>
<dbReference type="STRING" id="100226.gene:17759171"/>
<dbReference type="PaxDb" id="100226-SCO1578"/>
<dbReference type="GeneID" id="91387446"/>
<dbReference type="KEGG" id="sco:SCO1578"/>
<dbReference type="PATRIC" id="fig|100226.15.peg.1590"/>
<dbReference type="eggNOG" id="COG0548">
    <property type="taxonomic scope" value="Bacteria"/>
</dbReference>
<dbReference type="HOGENOM" id="CLU_053680_0_1_11"/>
<dbReference type="InParanoid" id="Q9L1A3"/>
<dbReference type="OrthoDB" id="9803155at2"/>
<dbReference type="PhylomeDB" id="Q9L1A3"/>
<dbReference type="UniPathway" id="UPA00068">
    <property type="reaction ID" value="UER00107"/>
</dbReference>
<dbReference type="Proteomes" id="UP000001973">
    <property type="component" value="Chromosome"/>
</dbReference>
<dbReference type="GO" id="GO:0005737">
    <property type="term" value="C:cytoplasm"/>
    <property type="evidence" value="ECO:0007669"/>
    <property type="project" value="UniProtKB-SubCell"/>
</dbReference>
<dbReference type="GO" id="GO:0003991">
    <property type="term" value="F:acetylglutamate kinase activity"/>
    <property type="evidence" value="ECO:0000318"/>
    <property type="project" value="GO_Central"/>
</dbReference>
<dbReference type="GO" id="GO:0005524">
    <property type="term" value="F:ATP binding"/>
    <property type="evidence" value="ECO:0007669"/>
    <property type="project" value="UniProtKB-UniRule"/>
</dbReference>
<dbReference type="GO" id="GO:0042450">
    <property type="term" value="P:arginine biosynthetic process via ornithine"/>
    <property type="evidence" value="ECO:0007669"/>
    <property type="project" value="UniProtKB-UniRule"/>
</dbReference>
<dbReference type="GO" id="GO:0006526">
    <property type="term" value="P:L-arginine biosynthetic process"/>
    <property type="evidence" value="ECO:0000318"/>
    <property type="project" value="GO_Central"/>
</dbReference>
<dbReference type="CDD" id="cd04250">
    <property type="entry name" value="AAK_NAGK-C"/>
    <property type="match status" value="1"/>
</dbReference>
<dbReference type="FunFam" id="3.40.1160.10:FF:000015">
    <property type="entry name" value="Acetylglutamate kinase"/>
    <property type="match status" value="1"/>
</dbReference>
<dbReference type="Gene3D" id="3.40.1160.10">
    <property type="entry name" value="Acetylglutamate kinase-like"/>
    <property type="match status" value="1"/>
</dbReference>
<dbReference type="HAMAP" id="MF_00082">
    <property type="entry name" value="ArgB"/>
    <property type="match status" value="1"/>
</dbReference>
<dbReference type="InterPro" id="IPR036393">
    <property type="entry name" value="AceGlu_kinase-like_sf"/>
</dbReference>
<dbReference type="InterPro" id="IPR004662">
    <property type="entry name" value="AcgluKinase_fam"/>
</dbReference>
<dbReference type="InterPro" id="IPR037528">
    <property type="entry name" value="ArgB"/>
</dbReference>
<dbReference type="InterPro" id="IPR001048">
    <property type="entry name" value="Asp/Glu/Uridylate_kinase"/>
</dbReference>
<dbReference type="InterPro" id="IPR001057">
    <property type="entry name" value="Glu/AcGlu_kinase"/>
</dbReference>
<dbReference type="InterPro" id="IPR041727">
    <property type="entry name" value="NAGK-C"/>
</dbReference>
<dbReference type="NCBIfam" id="TIGR00761">
    <property type="entry name" value="argB"/>
    <property type="match status" value="1"/>
</dbReference>
<dbReference type="PANTHER" id="PTHR23342">
    <property type="entry name" value="N-ACETYLGLUTAMATE SYNTHASE"/>
    <property type="match status" value="1"/>
</dbReference>
<dbReference type="PANTHER" id="PTHR23342:SF0">
    <property type="entry name" value="N-ACETYLGLUTAMATE SYNTHASE, MITOCHONDRIAL"/>
    <property type="match status" value="1"/>
</dbReference>
<dbReference type="Pfam" id="PF00696">
    <property type="entry name" value="AA_kinase"/>
    <property type="match status" value="1"/>
</dbReference>
<dbReference type="PIRSF" id="PIRSF000728">
    <property type="entry name" value="NAGK"/>
    <property type="match status" value="1"/>
</dbReference>
<dbReference type="PRINTS" id="PR00474">
    <property type="entry name" value="GLU5KINASE"/>
</dbReference>
<dbReference type="SUPFAM" id="SSF53633">
    <property type="entry name" value="Carbamate kinase-like"/>
    <property type="match status" value="1"/>
</dbReference>
<name>ARGB_STRCO</name>
<proteinExistence type="inferred from homology"/>
<reference key="1">
    <citation type="journal article" date="2002" name="Nature">
        <title>Complete genome sequence of the model actinomycete Streptomyces coelicolor A3(2).</title>
        <authorList>
            <person name="Bentley S.D."/>
            <person name="Chater K.F."/>
            <person name="Cerdeno-Tarraga A.-M."/>
            <person name="Challis G.L."/>
            <person name="Thomson N.R."/>
            <person name="James K.D."/>
            <person name="Harris D.E."/>
            <person name="Quail M.A."/>
            <person name="Kieser H."/>
            <person name="Harper D."/>
            <person name="Bateman A."/>
            <person name="Brown S."/>
            <person name="Chandra G."/>
            <person name="Chen C.W."/>
            <person name="Collins M."/>
            <person name="Cronin A."/>
            <person name="Fraser A."/>
            <person name="Goble A."/>
            <person name="Hidalgo J."/>
            <person name="Hornsby T."/>
            <person name="Howarth S."/>
            <person name="Huang C.-H."/>
            <person name="Kieser T."/>
            <person name="Larke L."/>
            <person name="Murphy L.D."/>
            <person name="Oliver K."/>
            <person name="O'Neil S."/>
            <person name="Rabbinowitsch E."/>
            <person name="Rajandream M.A."/>
            <person name="Rutherford K.M."/>
            <person name="Rutter S."/>
            <person name="Seeger K."/>
            <person name="Saunders D."/>
            <person name="Sharp S."/>
            <person name="Squares R."/>
            <person name="Squares S."/>
            <person name="Taylor K."/>
            <person name="Warren T."/>
            <person name="Wietzorrek A."/>
            <person name="Woodward J.R."/>
            <person name="Barrell B.G."/>
            <person name="Parkhill J."/>
            <person name="Hopwood D.A."/>
        </authorList>
    </citation>
    <scope>NUCLEOTIDE SEQUENCE [LARGE SCALE GENOMIC DNA]</scope>
    <source>
        <strain>ATCC BAA-471 / A3(2) / M145</strain>
    </source>
</reference>
<organism>
    <name type="scientific">Streptomyces coelicolor (strain ATCC BAA-471 / A3(2) / M145)</name>
    <dbReference type="NCBI Taxonomy" id="100226"/>
    <lineage>
        <taxon>Bacteria</taxon>
        <taxon>Bacillati</taxon>
        <taxon>Actinomycetota</taxon>
        <taxon>Actinomycetes</taxon>
        <taxon>Kitasatosporales</taxon>
        <taxon>Streptomycetaceae</taxon>
        <taxon>Streptomyces</taxon>
        <taxon>Streptomyces albidoflavus group</taxon>
    </lineage>
</organism>
<feature type="chain" id="PRO_0000112672" description="Acetylglutamate kinase">
    <location>
        <begin position="1"/>
        <end position="306"/>
    </location>
</feature>
<feature type="binding site" evidence="1">
    <location>
        <begin position="75"/>
        <end position="76"/>
    </location>
    <ligand>
        <name>substrate</name>
    </ligand>
</feature>
<feature type="binding site" evidence="1">
    <location>
        <position position="97"/>
    </location>
    <ligand>
        <name>substrate</name>
    </ligand>
</feature>
<feature type="binding site" evidence="1">
    <location>
        <position position="197"/>
    </location>
    <ligand>
        <name>substrate</name>
    </ligand>
</feature>
<feature type="site" description="Transition state stabilizer" evidence="1">
    <location>
        <position position="40"/>
    </location>
</feature>
<feature type="site" description="Transition state stabilizer" evidence="1">
    <location>
        <position position="258"/>
    </location>
</feature>